<sequence>MVRIQELTAALSLASVVQASWIQKRNSINACLAAADVEFHEEDSEGWDMDGTAFNLRVDYDPAAIAIPRSTEDIAAAVQCGLDAGVQISAKGGGHSYGSYGFGGEDGHLMLELDRMYRVSVDDNNVATIQGGARLGYTALELLDQGNRALSHGTCPAVGVGGHVLGGGYGFATHTHGLTLDWLIGATVVLADASIVHVSETENADLFWALRGGGGGFAIVSEFEFNTFEAPEIITTYQVTTTWNRKQHVAGLKALQDWAQNTMPRELSMRLEINANALNWEGNFFGNAKDLKKILQPIMKKAGGKSTISKLVETDWYGQINTYLYGADLNITYNYDVHEYFYANSLTAPRLSDEAIQAFVDYKFDNSSVRPGRGWWIQWDFHGGKNSALAAVSNDETAYAHRDQLWLWQFYDSIYDYENNTSPYPESGFEFMQGFVATIEDTLPEDRKGKYFNYADTTLTKEEAQKLYWRGNLEKLQAIKAKYDPEDVFGNVVSVEPIA</sequence>
<protein>
    <recommendedName>
        <fullName evidence="7">Glucooligosaccharide oxidase</fullName>
        <shortName>GOOX</shortName>
        <ecNumber evidence="10">1.1.3.-</ecNumber>
    </recommendedName>
</protein>
<reference key="1">
    <citation type="journal article" date="2005" name="Appl. Environ. Microbiol.">
        <title>Structural characterization of glucooligosaccharide oxidase from Acremonium strictum.</title>
        <authorList>
            <person name="Lee M.H."/>
            <person name="Lai W.L."/>
            <person name="Lin S.F."/>
            <person name="Hsu C.S."/>
            <person name="Liaw S.H."/>
            <person name="Tsai Y.C."/>
        </authorList>
    </citation>
    <scope>NUCLEOTIDE SEQUENCE [MRNA]</scope>
    <scope>PROTEIN SEQUENCE OF 270-294 AND 300-321</scope>
    <scope>FUNCTION</scope>
    <scope>CATALYTIC ACTIVITY</scope>
    <scope>BIOPHYSICOCHEMICAL PROPERTIES</scope>
    <scope>MUTAGENESIS OF HIS-95</scope>
    <source>
        <strain>T1</strain>
    </source>
</reference>
<reference key="2">
    <citation type="journal article" date="1991" name="Biochim. Biophys. Acta">
        <title>Purification and characterization of a novel glucooligosaccharide oxidase from Acremonium strictum T1.</title>
        <authorList>
            <person name="Lin S.F."/>
            <person name="Yang T.Y."/>
            <person name="Inukai T."/>
            <person name="Yamasaki M."/>
            <person name="Tsai Y.C."/>
        </authorList>
    </citation>
    <scope>PROTEIN SEQUENCE OF 26-55</scope>
    <scope>FUNCTION</scope>
    <scope>CATALYTIC ACTIVITY</scope>
    <scope>COFACTOR</scope>
    <scope>BIOPHYSICOCHEMICAL PROPERTIES</scope>
    <scope>GLYCOSYLATION</scope>
    <scope>SUBCELLULAR LOCATION</scope>
    <source>
        <strain>T1</strain>
    </source>
</reference>
<reference evidence="11 12" key="3">
    <citation type="journal article" date="2005" name="J. Biol. Chem.">
        <title>Crystal structure of glucooligosaccharide oxidase from Acremonium strictum: a novel flavinylation of 6-S-cysteinyl, 8alpha-N1-histidyl FAD.</title>
        <authorList>
            <person name="Huang C.H."/>
            <person name="Lai W.L."/>
            <person name="Lee M.H."/>
            <person name="Chen C.J."/>
            <person name="Vasella A."/>
            <person name="Tsai Y.C."/>
            <person name="Liaw S.H."/>
        </authorList>
    </citation>
    <scope>X-RAY CRYSTALLOGRAPHY (1.55 ANGSTROMS) OF 26-499 IN COMPLEX WITH PRODUCT ANALOG INHIBITOR AND FAD</scope>
    <scope>DISULFIDE BONDS</scope>
    <scope>GLYCOSYLATION AT ASN-330 AND ASN-366</scope>
</reference>
<reference evidence="13" key="4">
    <citation type="journal article" date="2008" name="J. Biol. Chem.">
        <title>Functional roles of the 6-S-cysteinyl, 8alpha-N1-histidyl FAD in glucooligosaccharide oxidase from Acremonium strictum.</title>
        <authorList>
            <person name="Huang C.H."/>
            <person name="Winkler A."/>
            <person name="Chen C.L."/>
            <person name="Lai W.L."/>
            <person name="Tsai Y.C."/>
            <person name="Macheroux P."/>
            <person name="Liaw S.H."/>
        </authorList>
    </citation>
    <scope>X-RAY CRYSTALLOGRAPHY (1.69 ANGSTROMS) OF 26-499 IN COMPLEX WITH FAD</scope>
    <scope>DISULFIDE BONDS</scope>
    <scope>GLYCOSYLATION AT ASN-330 AND ASN-366</scope>
    <scope>MUTAGENESIS OF HIS-95 AND CYS-155</scope>
</reference>
<proteinExistence type="evidence at protein level"/>
<accession>Q6PW77</accession>
<organism>
    <name type="scientific">Sarocladium strictum</name>
    <name type="common">Black bundle disease fungus</name>
    <name type="synonym">Acremonium strictum</name>
    <dbReference type="NCBI Taxonomy" id="5046"/>
    <lineage>
        <taxon>Eukaryota</taxon>
        <taxon>Fungi</taxon>
        <taxon>Dikarya</taxon>
        <taxon>Ascomycota</taxon>
        <taxon>Pezizomycotina</taxon>
        <taxon>Sordariomycetes</taxon>
        <taxon>Hypocreomycetidae</taxon>
        <taxon>Hypocreales</taxon>
        <taxon>Sarocladiaceae</taxon>
        <taxon>Sarocladium</taxon>
    </lineage>
</organism>
<gene>
    <name type="primary">gluO</name>
</gene>
<comment type="function">
    <text evidence="4 5">Catalyzes the selective oxidation of C1 hydroxyl moieties on mono- and disaccharides with concomitant reduction of molecular oxygen to hydrogen peroxide. This results in the formation of the corresponding lactones, which typically undergo spontaneous hydrolysis. Glucooligosaccharide oxidase is able to oxidize the monosaccharide D-glucose as well as the disaccharides maltose, cellobiose, and lactose. In addition, it shows high selectivity for cello- and maltooligosaccharides, indicating that glucooligosaccharide oxidase prefers oligosaccharides with a beta-D-glucosyl unit on the reducing end and additional sugar units linked by alpha- or beta-1,4 glucosidic bonds.</text>
</comment>
<comment type="catalytic activity">
    <reaction evidence="4">
        <text>beta-lactose + O2 = lactobiono-1,5-lactone + H2O2</text>
        <dbReference type="Rhea" id="RHEA:59352"/>
        <dbReference type="ChEBI" id="CHEBI:15379"/>
        <dbReference type="ChEBI" id="CHEBI:16240"/>
        <dbReference type="ChEBI" id="CHEBI:36218"/>
        <dbReference type="ChEBI" id="CHEBI:143068"/>
    </reaction>
</comment>
<comment type="catalytic activity">
    <reaction evidence="4">
        <text>D-cellobiose + O2 = D-cellobiono-1,5-lactone + H2O2</text>
        <dbReference type="Rhea" id="RHEA:59316"/>
        <dbReference type="ChEBI" id="CHEBI:15379"/>
        <dbReference type="ChEBI" id="CHEBI:16240"/>
        <dbReference type="ChEBI" id="CHEBI:17057"/>
        <dbReference type="ChEBI" id="CHEBI:17863"/>
    </reaction>
</comment>
<comment type="catalytic activity">
    <reaction evidence="4">
        <text>D-cellotriose + O2 = D-cellotriono-1,5-lactone + H2O2</text>
        <dbReference type="Rhea" id="RHEA:59656"/>
        <dbReference type="ChEBI" id="CHEBI:3528"/>
        <dbReference type="ChEBI" id="CHEBI:15379"/>
        <dbReference type="ChEBI" id="CHEBI:16240"/>
        <dbReference type="ChEBI" id="CHEBI:143171"/>
    </reaction>
</comment>
<comment type="catalytic activity">
    <reaction evidence="4">
        <text>D-cellotetraose + O2 = D-cellotetraono-1,5-lactone + H2O2</text>
        <dbReference type="Rhea" id="RHEA:59660"/>
        <dbReference type="ChEBI" id="CHEBI:15379"/>
        <dbReference type="ChEBI" id="CHEBI:16240"/>
        <dbReference type="ChEBI" id="CHEBI:62974"/>
        <dbReference type="ChEBI" id="CHEBI:143172"/>
    </reaction>
</comment>
<comment type="catalytic activity">
    <reaction evidence="4">
        <text>D-cellopentaose + O2 = D-cellopentaono-1,5-lactone + H2O2</text>
        <dbReference type="Rhea" id="RHEA:59664"/>
        <dbReference type="ChEBI" id="CHEBI:15379"/>
        <dbReference type="ChEBI" id="CHEBI:16240"/>
        <dbReference type="ChEBI" id="CHEBI:62976"/>
        <dbReference type="ChEBI" id="CHEBI:143173"/>
    </reaction>
</comment>
<comment type="catalytic activity">
    <reaction evidence="4">
        <text>D-cellohexaose + O2 = D-cellohexaono-1,5-lactone + H2O2</text>
        <dbReference type="Rhea" id="RHEA:59668"/>
        <dbReference type="ChEBI" id="CHEBI:15379"/>
        <dbReference type="ChEBI" id="CHEBI:16240"/>
        <dbReference type="ChEBI" id="CHEBI:143174"/>
        <dbReference type="ChEBI" id="CHEBI:143194"/>
    </reaction>
</comment>
<comment type="cofactor">
    <cofactor evidence="5">
        <name>FAD</name>
        <dbReference type="ChEBI" id="CHEBI:57692"/>
    </cofactor>
    <text evidence="3 5 6">Binds 1 FAD per subunit in a bicovalent manner.</text>
</comment>
<comment type="biophysicochemical properties">
    <kinetics>
        <KM evidence="4">8.12 mM for glucose</KM>
        <KM evidence="4">0.066 mM for lactose</KM>
        <KM evidence="4">2.47 mM for maltose</KM>
        <KM evidence="4">1.11 mM for maltotriose</KM>
        <KM evidence="4">2.51 mM for maltotetraose</KM>
        <KM evidence="4">10.6 mM for maltopentaose</KM>
        <KM evidence="4">2.6 mM for maltohexaose</KM>
        <KM evidence="4">6.95 mM for maltoheptaose</KM>
        <KM evidence="4">0.048 mM for cellobiose</KM>
        <KM evidence="4">0.026 mM for cellotriose</KM>
        <KM evidence="4">0.012 mM for cellotetraose</KM>
        <KM evidence="4">0.026 mM for cellopentaose</KM>
        <KM evidence="4">0.069 mM for cellohexaose</KM>
    </kinetics>
    <phDependence>
        <text evidence="5">Optimum pH is 10. Stable from pH 5 to pH 11.</text>
    </phDependence>
    <temperatureDependence>
        <text evidence="5">Optimum temperature is 50 degrees Celsius.</text>
    </temperatureDependence>
</comment>
<comment type="subcellular location">
    <subcellularLocation>
        <location evidence="5">Secreted</location>
    </subcellularLocation>
</comment>
<comment type="PTM">
    <text evidence="3 6">The FAD cofactor is bound via a bicovalent 6-S-cysteinyl, 8alpha-N1-histidyl FAD linkage.</text>
</comment>
<comment type="similarity">
    <text evidence="8">Belongs to the oxygen-dependent FAD-linked oxidoreductase family.</text>
</comment>
<dbReference type="EC" id="1.1.3.-" evidence="10"/>
<dbReference type="EMBL" id="AY573966">
    <property type="protein sequence ID" value="AAS79317.1"/>
    <property type="molecule type" value="mRNA"/>
</dbReference>
<dbReference type="PDB" id="1ZR6">
    <property type="method" value="X-ray"/>
    <property type="resolution" value="1.55 A"/>
    <property type="chains" value="A=26-499"/>
</dbReference>
<dbReference type="PDB" id="2AXR">
    <property type="method" value="X-ray"/>
    <property type="resolution" value="1.98 A"/>
    <property type="chains" value="A=26-499"/>
</dbReference>
<dbReference type="PDB" id="3HSU">
    <property type="method" value="X-ray"/>
    <property type="resolution" value="1.69 A"/>
    <property type="chains" value="A=26-499"/>
</dbReference>
<dbReference type="PDBsum" id="1ZR6"/>
<dbReference type="PDBsum" id="2AXR"/>
<dbReference type="PDBsum" id="3HSU"/>
<dbReference type="SMR" id="Q6PW77"/>
<dbReference type="CAZy" id="AA7">
    <property type="family name" value="Auxiliary Activities 7"/>
</dbReference>
<dbReference type="GlyCosmos" id="Q6PW77">
    <property type="glycosylation" value="3 sites, No reported glycans"/>
</dbReference>
<dbReference type="iPTMnet" id="Q6PW77"/>
<dbReference type="BRENDA" id="1.1.99.B3">
    <property type="organism ID" value="10953"/>
</dbReference>
<dbReference type="EvolutionaryTrace" id="Q6PW77"/>
<dbReference type="GO" id="GO:0005576">
    <property type="term" value="C:extracellular region"/>
    <property type="evidence" value="ECO:0007669"/>
    <property type="project" value="UniProtKB-SubCell"/>
</dbReference>
<dbReference type="GO" id="GO:0071949">
    <property type="term" value="F:FAD binding"/>
    <property type="evidence" value="ECO:0007669"/>
    <property type="project" value="InterPro"/>
</dbReference>
<dbReference type="GO" id="GO:0046872">
    <property type="term" value="F:metal ion binding"/>
    <property type="evidence" value="ECO:0007669"/>
    <property type="project" value="UniProtKB-KW"/>
</dbReference>
<dbReference type="GO" id="GO:0016491">
    <property type="term" value="F:oxidoreductase activity"/>
    <property type="evidence" value="ECO:0007669"/>
    <property type="project" value="UniProtKB-KW"/>
</dbReference>
<dbReference type="Gene3D" id="3.30.465.10">
    <property type="match status" value="1"/>
</dbReference>
<dbReference type="Gene3D" id="3.40.462.20">
    <property type="match status" value="1"/>
</dbReference>
<dbReference type="Gene3D" id="6.10.140.1160">
    <property type="match status" value="1"/>
</dbReference>
<dbReference type="Gene3D" id="3.30.43.10">
    <property type="entry name" value="Uridine Diphospho-n-acetylenolpyruvylglucosamine Reductase, domain 2"/>
    <property type="match status" value="1"/>
</dbReference>
<dbReference type="InterPro" id="IPR012951">
    <property type="entry name" value="BBE"/>
</dbReference>
<dbReference type="InterPro" id="IPR016166">
    <property type="entry name" value="FAD-bd_PCMH"/>
</dbReference>
<dbReference type="InterPro" id="IPR036318">
    <property type="entry name" value="FAD-bd_PCMH-like_sf"/>
</dbReference>
<dbReference type="InterPro" id="IPR016167">
    <property type="entry name" value="FAD-bd_PCMH_sub1"/>
</dbReference>
<dbReference type="InterPro" id="IPR016169">
    <property type="entry name" value="FAD-bd_PCMH_sub2"/>
</dbReference>
<dbReference type="InterPro" id="IPR050416">
    <property type="entry name" value="FAD-linked_Oxidoreductase"/>
</dbReference>
<dbReference type="InterPro" id="IPR006094">
    <property type="entry name" value="Oxid_FAD_bind_N"/>
</dbReference>
<dbReference type="InterPro" id="IPR006093">
    <property type="entry name" value="Oxy_OxRdtase_FAD_BS"/>
</dbReference>
<dbReference type="PANTHER" id="PTHR42973">
    <property type="entry name" value="BINDING OXIDOREDUCTASE, PUTATIVE (AFU_ORTHOLOGUE AFUA_1G17690)-RELATED"/>
    <property type="match status" value="1"/>
</dbReference>
<dbReference type="PANTHER" id="PTHR42973:SF39">
    <property type="entry name" value="FAD-BINDING PCMH-TYPE DOMAIN-CONTAINING PROTEIN"/>
    <property type="match status" value="1"/>
</dbReference>
<dbReference type="Pfam" id="PF08031">
    <property type="entry name" value="BBE"/>
    <property type="match status" value="1"/>
</dbReference>
<dbReference type="Pfam" id="PF01565">
    <property type="entry name" value="FAD_binding_4"/>
    <property type="match status" value="1"/>
</dbReference>
<dbReference type="SUPFAM" id="SSF56176">
    <property type="entry name" value="FAD-binding/transporter-associated domain-like"/>
    <property type="match status" value="1"/>
</dbReference>
<dbReference type="PROSITE" id="PS51387">
    <property type="entry name" value="FAD_PCMH"/>
    <property type="match status" value="1"/>
</dbReference>
<dbReference type="PROSITE" id="PS00862">
    <property type="entry name" value="OX2_COVAL_FAD"/>
    <property type="match status" value="1"/>
</dbReference>
<feature type="signal peptide" evidence="5">
    <location>
        <begin position="1"/>
        <end position="25"/>
    </location>
</feature>
<feature type="chain" id="PRO_5004278602" description="Glucooligosaccharide oxidase">
    <location>
        <begin position="26"/>
        <end position="499"/>
    </location>
</feature>
<feature type="domain" description="FAD-binding PCMH-type" evidence="2">
    <location>
        <begin position="58"/>
        <end position="230"/>
    </location>
</feature>
<feature type="active site" description="Proton acceptor" evidence="9">
    <location>
        <position position="454"/>
    </location>
</feature>
<feature type="binding site" evidence="3 12">
    <location>
        <position position="97"/>
    </location>
    <ligand>
        <name>substrate</name>
    </ligand>
</feature>
<feature type="binding site" evidence="3 12">
    <location>
        <position position="154"/>
    </location>
    <ligand>
        <name>substrate</name>
    </ligand>
</feature>
<feature type="binding site" evidence="3 12">
    <location>
        <position position="270"/>
    </location>
    <ligand>
        <name>substrate</name>
    </ligand>
</feature>
<feature type="binding site" evidence="3 12">
    <location>
        <position position="378"/>
    </location>
    <ligand>
        <name>substrate</name>
    </ligand>
</feature>
<feature type="binding site" evidence="3 12">
    <location>
        <position position="409"/>
    </location>
    <ligand>
        <name>substrate</name>
    </ligand>
</feature>
<feature type="binding site" evidence="3 12">
    <location>
        <position position="454"/>
    </location>
    <ligand>
        <name>substrate</name>
    </ligand>
</feature>
<feature type="glycosylation site" description="N-linked (GlcNAc...) asparagine" evidence="3 11 12 13">
    <location>
        <position position="330"/>
    </location>
</feature>
<feature type="glycosylation site" description="N-linked (GlcNAc...) asparagine" evidence="3 11 12 13">
    <location>
        <position position="366"/>
    </location>
</feature>
<feature type="glycosylation site" description="N-linked (GlcNAc...) asparagine" evidence="1">
    <location>
        <position position="419"/>
    </location>
</feature>
<feature type="disulfide bond" evidence="11 12 13">
    <location>
        <begin position="31"/>
        <end position="80"/>
    </location>
</feature>
<feature type="cross-link" description="6-(S-cysteinyl)-8alpha-(pros-histidyl)-FAD (His-Cys)" evidence="3 6">
    <location>
        <begin position="95"/>
        <end position="155"/>
    </location>
</feature>
<feature type="mutagenesis site" description="Does not abolish the covalent FAD linkage and has little effect on the Km, but significantly reduced kcat values 50- to 600-fold. Abolishes FAD binding; when associated with A-155." evidence="4 6">
    <original>H</original>
    <variation>A</variation>
    <variation>S</variation>
    <variation>C</variation>
    <variation>Y</variation>
    <location>
        <position position="95"/>
    </location>
</feature>
<feature type="mutagenesis site" description="Abolishes FAD binding; when associated with A-95." evidence="6">
    <original>C</original>
    <variation>A</variation>
    <location>
        <position position="155"/>
    </location>
</feature>
<feature type="helix" evidence="14">
    <location>
        <begin position="27"/>
        <end position="34"/>
    </location>
</feature>
<feature type="helix" evidence="14">
    <location>
        <begin position="45"/>
        <end position="50"/>
    </location>
</feature>
<feature type="helix" evidence="14">
    <location>
        <begin position="56"/>
        <end position="58"/>
    </location>
</feature>
<feature type="strand" evidence="14">
    <location>
        <begin position="63"/>
        <end position="67"/>
    </location>
</feature>
<feature type="helix" evidence="14">
    <location>
        <begin position="71"/>
        <end position="84"/>
    </location>
</feature>
<feature type="strand" evidence="14">
    <location>
        <begin position="88"/>
        <end position="93"/>
    </location>
</feature>
<feature type="turn" evidence="14">
    <location>
        <begin position="100"/>
        <end position="103"/>
    </location>
</feature>
<feature type="strand" evidence="14">
    <location>
        <begin position="104"/>
        <end position="107"/>
    </location>
</feature>
<feature type="strand" evidence="14">
    <location>
        <begin position="109"/>
        <end position="112"/>
    </location>
</feature>
<feature type="strand" evidence="14">
    <location>
        <begin position="119"/>
        <end position="121"/>
    </location>
</feature>
<feature type="strand" evidence="14">
    <location>
        <begin position="127"/>
        <end position="130"/>
    </location>
</feature>
<feature type="helix" evidence="14">
    <location>
        <begin position="135"/>
        <end position="144"/>
    </location>
</feature>
<feature type="strand" evidence="14">
    <location>
        <begin position="147"/>
        <end position="149"/>
    </location>
</feature>
<feature type="helix" evidence="14">
    <location>
        <begin position="160"/>
        <end position="166"/>
    </location>
</feature>
<feature type="helix" evidence="14">
    <location>
        <begin position="173"/>
        <end position="176"/>
    </location>
</feature>
<feature type="helix" evidence="14">
    <location>
        <begin position="179"/>
        <end position="182"/>
    </location>
</feature>
<feature type="strand" evidence="14">
    <location>
        <begin position="183"/>
        <end position="189"/>
    </location>
</feature>
<feature type="strand" evidence="14">
    <location>
        <begin position="195"/>
        <end position="199"/>
    </location>
</feature>
<feature type="helix" evidence="14">
    <location>
        <begin position="204"/>
        <end position="210"/>
    </location>
</feature>
<feature type="strand" evidence="14">
    <location>
        <begin position="215"/>
        <end position="217"/>
    </location>
</feature>
<feature type="strand" evidence="14">
    <location>
        <begin position="219"/>
        <end position="225"/>
    </location>
</feature>
<feature type="strand" evidence="14">
    <location>
        <begin position="234"/>
        <end position="241"/>
    </location>
</feature>
<feature type="helix" evidence="14">
    <location>
        <begin position="245"/>
        <end position="261"/>
    </location>
</feature>
<feature type="strand" evidence="14">
    <location>
        <begin position="270"/>
        <end position="274"/>
    </location>
</feature>
<feature type="strand" evidence="14">
    <location>
        <begin position="277"/>
        <end position="286"/>
    </location>
</feature>
<feature type="helix" evidence="14">
    <location>
        <begin position="288"/>
        <end position="301"/>
    </location>
</feature>
<feature type="strand" evidence="14">
    <location>
        <begin position="306"/>
        <end position="314"/>
    </location>
</feature>
<feature type="helix" evidence="14">
    <location>
        <begin position="316"/>
        <end position="320"/>
    </location>
</feature>
<feature type="strand" evidence="14">
    <location>
        <begin position="341"/>
        <end position="350"/>
    </location>
</feature>
<feature type="helix" evidence="14">
    <location>
        <begin position="353"/>
        <end position="365"/>
    </location>
</feature>
<feature type="strand" evidence="14">
    <location>
        <begin position="373"/>
        <end position="381"/>
    </location>
</feature>
<feature type="helix" evidence="14">
    <location>
        <begin position="389"/>
        <end position="391"/>
    </location>
</feature>
<feature type="turn" evidence="14">
    <location>
        <begin position="394"/>
        <end position="396"/>
    </location>
</feature>
<feature type="strand" evidence="14">
    <location>
        <begin position="405"/>
        <end position="414"/>
    </location>
</feature>
<feature type="turn" evidence="14">
    <location>
        <begin position="415"/>
        <end position="419"/>
    </location>
</feature>
<feature type="turn" evidence="14">
    <location>
        <begin position="422"/>
        <end position="426"/>
    </location>
</feature>
<feature type="helix" evidence="14">
    <location>
        <begin position="430"/>
        <end position="440"/>
    </location>
</feature>
<feature type="helix" evidence="14">
    <location>
        <begin position="445"/>
        <end position="447"/>
    </location>
</feature>
<feature type="helix" evidence="14">
    <location>
        <begin position="452"/>
        <end position="454"/>
    </location>
</feature>
<feature type="helix" evidence="14">
    <location>
        <begin position="461"/>
        <end position="469"/>
    </location>
</feature>
<feature type="helix" evidence="14">
    <location>
        <begin position="470"/>
        <end position="472"/>
    </location>
</feature>
<feature type="helix" evidence="14">
    <location>
        <begin position="473"/>
        <end position="483"/>
    </location>
</feature>
<feature type="strand" evidence="15">
    <location>
        <begin position="492"/>
        <end position="494"/>
    </location>
</feature>
<evidence type="ECO:0000255" key="1">
    <source>
        <dbReference type="PROSITE-ProRule" id="PRU00498"/>
    </source>
</evidence>
<evidence type="ECO:0000255" key="2">
    <source>
        <dbReference type="PROSITE-ProRule" id="PRU00718"/>
    </source>
</evidence>
<evidence type="ECO:0000269" key="3">
    <source>
    </source>
</evidence>
<evidence type="ECO:0000269" key="4">
    <source>
    </source>
</evidence>
<evidence type="ECO:0000269" key="5">
    <source>
    </source>
</evidence>
<evidence type="ECO:0000269" key="6">
    <source>
    </source>
</evidence>
<evidence type="ECO:0000303" key="7">
    <source>
    </source>
</evidence>
<evidence type="ECO:0000305" key="8"/>
<evidence type="ECO:0000305" key="9">
    <source>
    </source>
</evidence>
<evidence type="ECO:0000305" key="10">
    <source>
    </source>
</evidence>
<evidence type="ECO:0007744" key="11">
    <source>
        <dbReference type="PDB" id="1ZR6"/>
    </source>
</evidence>
<evidence type="ECO:0007744" key="12">
    <source>
        <dbReference type="PDB" id="2AXR"/>
    </source>
</evidence>
<evidence type="ECO:0007744" key="13">
    <source>
        <dbReference type="PDB" id="3HSU"/>
    </source>
</evidence>
<evidence type="ECO:0007829" key="14">
    <source>
        <dbReference type="PDB" id="1ZR6"/>
    </source>
</evidence>
<evidence type="ECO:0007829" key="15">
    <source>
        <dbReference type="PDB" id="2AXR"/>
    </source>
</evidence>
<keyword id="KW-0002">3D-structure</keyword>
<keyword id="KW-0903">Direct protein sequencing</keyword>
<keyword id="KW-1015">Disulfide bond</keyword>
<keyword id="KW-0274">FAD</keyword>
<keyword id="KW-0285">Flavoprotein</keyword>
<keyword id="KW-0325">Glycoprotein</keyword>
<keyword id="KW-0479">Metal-binding</keyword>
<keyword id="KW-0547">Nucleotide-binding</keyword>
<keyword id="KW-0560">Oxidoreductase</keyword>
<keyword id="KW-0964">Secreted</keyword>
<keyword id="KW-0732">Signal</keyword>
<keyword id="KW-0862">Zinc</keyword>
<name>GOOX_SARSR</name>